<reference key="1">
    <citation type="journal article" date="1992" name="Plant J.">
        <title>Molecular characterization and expression of an alfalfa protein with sequence similarity to mammalian ERp72, a glucose-regulated endoplasmic reticulum protein containing active site sequences of protein disulphide isomerase.</title>
        <authorList>
            <person name="Shorrosh B.S."/>
            <person name="Dixon R.A."/>
        </authorList>
    </citation>
    <scope>NUCLEOTIDE SEQUENCE [MRNA]</scope>
</reference>
<feature type="signal peptide" evidence="2">
    <location>
        <begin position="1"/>
        <end position="28"/>
    </location>
</feature>
<feature type="chain" id="PRO_0000034243" description="Probable protein disulfide-isomerase A6">
    <location>
        <begin position="29"/>
        <end position="364"/>
    </location>
</feature>
<feature type="domain" description="Thioredoxin 1" evidence="3">
    <location>
        <begin position="29"/>
        <end position="137"/>
    </location>
</feature>
<feature type="domain" description="Thioredoxin 2" evidence="3">
    <location>
        <begin position="139"/>
        <end position="256"/>
    </location>
</feature>
<feature type="active site" description="Nucleophile" evidence="1">
    <location>
        <position position="58"/>
    </location>
</feature>
<feature type="active site" description="Nucleophile" evidence="1">
    <location>
        <position position="61"/>
    </location>
</feature>
<feature type="active site" description="Nucleophile" evidence="1">
    <location>
        <position position="177"/>
    </location>
</feature>
<feature type="active site" description="Nucleophile" evidence="1">
    <location>
        <position position="180"/>
    </location>
</feature>
<feature type="site" description="Contributes to redox potential value" evidence="1">
    <location>
        <position position="59"/>
    </location>
</feature>
<feature type="site" description="Contributes to redox potential value" evidence="1">
    <location>
        <position position="60"/>
    </location>
</feature>
<feature type="site" description="Lowers pKa of C-terminal Cys of first active site" evidence="1">
    <location>
        <position position="123"/>
    </location>
</feature>
<feature type="site" description="Contributes to redox potential value" evidence="1">
    <location>
        <position position="178"/>
    </location>
</feature>
<feature type="site" description="Contributes to redox potential value" evidence="1">
    <location>
        <position position="179"/>
    </location>
</feature>
<feature type="site" description="Lowers pKa of C-terminal Cys of second active site" evidence="1">
    <location>
        <position position="242"/>
    </location>
</feature>
<feature type="disulfide bond" description="Redox-active" evidence="3">
    <location>
        <begin position="58"/>
        <end position="61"/>
    </location>
</feature>
<feature type="disulfide bond" description="Redox-active" evidence="3">
    <location>
        <begin position="177"/>
        <end position="180"/>
    </location>
</feature>
<organism>
    <name type="scientific">Medicago sativa</name>
    <name type="common">Alfalfa</name>
    <dbReference type="NCBI Taxonomy" id="3879"/>
    <lineage>
        <taxon>Eukaryota</taxon>
        <taxon>Viridiplantae</taxon>
        <taxon>Streptophyta</taxon>
        <taxon>Embryophyta</taxon>
        <taxon>Tracheophyta</taxon>
        <taxon>Spermatophyta</taxon>
        <taxon>Magnoliopsida</taxon>
        <taxon>eudicotyledons</taxon>
        <taxon>Gunneridae</taxon>
        <taxon>Pentapetalae</taxon>
        <taxon>rosids</taxon>
        <taxon>fabids</taxon>
        <taxon>Fabales</taxon>
        <taxon>Fabaceae</taxon>
        <taxon>Papilionoideae</taxon>
        <taxon>50 kb inversion clade</taxon>
        <taxon>NPAAA clade</taxon>
        <taxon>Hologalegina</taxon>
        <taxon>IRL clade</taxon>
        <taxon>Trifolieae</taxon>
        <taxon>Medicago</taxon>
    </lineage>
</organism>
<sequence length="364" mass="40492">MKMEMHQIWSRIALASFAFAILFVSVSADDVVVLTEENFEKEVGHDKGALVEFYAPWCGHCKKLAPEYEKLPNSFKKAKSVLIAKVDCDEHKSVCSKYGVSGYPTIQWFPKGSLEPKKFEGPRTAESLAEFVNTEGGTNVKIATAPSHVVVLTPETFNEVVLDGTKDVLVEFYAPWCGHCKSLAPIYEKVAAVFKSEDDVVIANLDADKYRDLAEKYDVSGFPTLKFFPKGNKAGEDYGGGRDLDDFVAFINEKSGTSRDAKGQLTSEAGIVEDLDELVKEFVAANDEEKKAVFARIEEEVKKLEGSASRYGKIYLKVSKKYLEKGSDYAKNEIQRLERLLEKSISPAKADELTLKKNILSTYA</sequence>
<evidence type="ECO:0000250" key="1"/>
<evidence type="ECO:0000255" key="2"/>
<evidence type="ECO:0000255" key="3">
    <source>
        <dbReference type="PROSITE-ProRule" id="PRU00691"/>
    </source>
</evidence>
<evidence type="ECO:0000305" key="4"/>
<protein>
    <recommendedName>
        <fullName>Probable protein disulfide-isomerase A6</fullName>
        <ecNumber>5.3.4.1</ecNumber>
    </recommendedName>
    <alternativeName>
        <fullName>P5</fullName>
    </alternativeName>
</protein>
<comment type="catalytic activity">
    <reaction>
        <text>Catalyzes the rearrangement of -S-S- bonds in proteins.</text>
        <dbReference type="EC" id="5.3.4.1"/>
    </reaction>
</comment>
<comment type="subcellular location">
    <subcellularLocation>
        <location evidence="1">Endoplasmic reticulum lumen</location>
    </subcellularLocation>
</comment>
<comment type="similarity">
    <text evidence="4">Belongs to the protein disulfide isomerase family.</text>
</comment>
<proteinExistence type="evidence at transcript level"/>
<name>PDIA6_MEDSA</name>
<accession>P38661</accession>
<dbReference type="EC" id="5.3.4.1"/>
<dbReference type="EMBL" id="M80235">
    <property type="protein sequence ID" value="AAB46930.1"/>
    <property type="molecule type" value="mRNA"/>
</dbReference>
<dbReference type="PIR" id="T09614">
    <property type="entry name" value="T09614"/>
</dbReference>
<dbReference type="SMR" id="P38661"/>
<dbReference type="GO" id="GO:0005788">
    <property type="term" value="C:endoplasmic reticulum lumen"/>
    <property type="evidence" value="ECO:0007669"/>
    <property type="project" value="UniProtKB-SubCell"/>
</dbReference>
<dbReference type="GO" id="GO:0003756">
    <property type="term" value="F:protein disulfide isomerase activity"/>
    <property type="evidence" value="ECO:0007669"/>
    <property type="project" value="UniProtKB-EC"/>
</dbReference>
<dbReference type="GO" id="GO:0006457">
    <property type="term" value="P:protein folding"/>
    <property type="evidence" value="ECO:0007669"/>
    <property type="project" value="TreeGrafter"/>
</dbReference>
<dbReference type="CDD" id="cd00238">
    <property type="entry name" value="ERp29c"/>
    <property type="match status" value="1"/>
</dbReference>
<dbReference type="CDD" id="cd02998">
    <property type="entry name" value="PDI_a_ERp38"/>
    <property type="match status" value="2"/>
</dbReference>
<dbReference type="FunFam" id="3.40.30.10:FF:000032">
    <property type="entry name" value="Protein disulfide-isomerase A6 homolog"/>
    <property type="match status" value="2"/>
</dbReference>
<dbReference type="Gene3D" id="1.20.1150.12">
    <property type="entry name" value="Endoplasmic reticulum resident protein 29, C-terminal domain"/>
    <property type="match status" value="1"/>
</dbReference>
<dbReference type="Gene3D" id="3.40.30.10">
    <property type="entry name" value="Glutaredoxin"/>
    <property type="match status" value="2"/>
</dbReference>
<dbReference type="InterPro" id="IPR011679">
    <property type="entry name" value="ERp29_C"/>
</dbReference>
<dbReference type="InterPro" id="IPR036356">
    <property type="entry name" value="ERp29_C_sf"/>
</dbReference>
<dbReference type="InterPro" id="IPR051063">
    <property type="entry name" value="PDI"/>
</dbReference>
<dbReference type="InterPro" id="IPR005788">
    <property type="entry name" value="PDI_thioredoxin-like_dom"/>
</dbReference>
<dbReference type="InterPro" id="IPR036249">
    <property type="entry name" value="Thioredoxin-like_sf"/>
</dbReference>
<dbReference type="InterPro" id="IPR017937">
    <property type="entry name" value="Thioredoxin_CS"/>
</dbReference>
<dbReference type="InterPro" id="IPR013766">
    <property type="entry name" value="Thioredoxin_domain"/>
</dbReference>
<dbReference type="NCBIfam" id="TIGR01126">
    <property type="entry name" value="pdi_dom"/>
    <property type="match status" value="2"/>
</dbReference>
<dbReference type="PANTHER" id="PTHR45672">
    <property type="entry name" value="PROTEIN DISULFIDE-ISOMERASE C17H9.14C-RELATED"/>
    <property type="match status" value="1"/>
</dbReference>
<dbReference type="PANTHER" id="PTHR45672:SF17">
    <property type="entry name" value="PROTEIN DISULFIDE-ISOMERASE LIKE 2-1"/>
    <property type="match status" value="1"/>
</dbReference>
<dbReference type="Pfam" id="PF07749">
    <property type="entry name" value="ERp29"/>
    <property type="match status" value="1"/>
</dbReference>
<dbReference type="Pfam" id="PF00085">
    <property type="entry name" value="Thioredoxin"/>
    <property type="match status" value="2"/>
</dbReference>
<dbReference type="PRINTS" id="PR00421">
    <property type="entry name" value="THIOREDOXIN"/>
</dbReference>
<dbReference type="SUPFAM" id="SSF47933">
    <property type="entry name" value="ERP29 C domain-like"/>
    <property type="match status" value="1"/>
</dbReference>
<dbReference type="SUPFAM" id="SSF52833">
    <property type="entry name" value="Thioredoxin-like"/>
    <property type="match status" value="2"/>
</dbReference>
<dbReference type="PROSITE" id="PS00194">
    <property type="entry name" value="THIOREDOXIN_1"/>
    <property type="match status" value="2"/>
</dbReference>
<dbReference type="PROSITE" id="PS51352">
    <property type="entry name" value="THIOREDOXIN_2"/>
    <property type="match status" value="2"/>
</dbReference>
<keyword id="KW-1015">Disulfide bond</keyword>
<keyword id="KW-0256">Endoplasmic reticulum</keyword>
<keyword id="KW-0413">Isomerase</keyword>
<keyword id="KW-0676">Redox-active center</keyword>
<keyword id="KW-0677">Repeat</keyword>
<keyword id="KW-0732">Signal</keyword>